<keyword id="KW-0131">Cell cycle</keyword>
<keyword id="KW-0132">Cell division</keyword>
<keyword id="KW-0717">Septation</keyword>
<gene>
    <name evidence="1" type="primary">spoVG</name>
    <name type="ordered locus">Cbei_0080</name>
</gene>
<evidence type="ECO:0000255" key="1">
    <source>
        <dbReference type="HAMAP-Rule" id="MF_00819"/>
    </source>
</evidence>
<reference key="1">
    <citation type="submission" date="2007-06" db="EMBL/GenBank/DDBJ databases">
        <title>Complete sequence of Clostridium beijerinckii NCIMB 8052.</title>
        <authorList>
            <consortium name="US DOE Joint Genome Institute"/>
            <person name="Copeland A."/>
            <person name="Lucas S."/>
            <person name="Lapidus A."/>
            <person name="Barry K."/>
            <person name="Detter J.C."/>
            <person name="Glavina del Rio T."/>
            <person name="Hammon N."/>
            <person name="Israni S."/>
            <person name="Dalin E."/>
            <person name="Tice H."/>
            <person name="Pitluck S."/>
            <person name="Sims D."/>
            <person name="Brettin T."/>
            <person name="Bruce D."/>
            <person name="Tapia R."/>
            <person name="Brainard J."/>
            <person name="Schmutz J."/>
            <person name="Larimer F."/>
            <person name="Land M."/>
            <person name="Hauser L."/>
            <person name="Kyrpides N."/>
            <person name="Mikhailova N."/>
            <person name="Bennet G."/>
            <person name="Cann I."/>
            <person name="Chen J.-S."/>
            <person name="Contreras A.L."/>
            <person name="Jones D."/>
            <person name="Kashket E."/>
            <person name="Mitchell W."/>
            <person name="Stoddard S."/>
            <person name="Schwarz W."/>
            <person name="Qureshi N."/>
            <person name="Young M."/>
            <person name="Shi Z."/>
            <person name="Ezeji T."/>
            <person name="White B."/>
            <person name="Blaschek H."/>
            <person name="Richardson P."/>
        </authorList>
    </citation>
    <scope>NUCLEOTIDE SEQUENCE [LARGE SCALE GENOMIC DNA]</scope>
    <source>
        <strain>ATCC 51743 / NCIMB 8052</strain>
    </source>
</reference>
<dbReference type="EMBL" id="CP000721">
    <property type="protein sequence ID" value="ABR32270.1"/>
    <property type="molecule type" value="Genomic_DNA"/>
</dbReference>
<dbReference type="RefSeq" id="WP_011967445.1">
    <property type="nucleotide sequence ID" value="NC_009617.1"/>
</dbReference>
<dbReference type="SMR" id="A6LPJ0"/>
<dbReference type="GeneID" id="66342949"/>
<dbReference type="KEGG" id="cbe:Cbei_0080"/>
<dbReference type="eggNOG" id="COG2088">
    <property type="taxonomic scope" value="Bacteria"/>
</dbReference>
<dbReference type="HOGENOM" id="CLU_103669_2_1_9"/>
<dbReference type="Proteomes" id="UP000000565">
    <property type="component" value="Chromosome"/>
</dbReference>
<dbReference type="GO" id="GO:0000917">
    <property type="term" value="P:division septum assembly"/>
    <property type="evidence" value="ECO:0007669"/>
    <property type="project" value="UniProtKB-KW"/>
</dbReference>
<dbReference type="GO" id="GO:0030435">
    <property type="term" value="P:sporulation resulting in formation of a cellular spore"/>
    <property type="evidence" value="ECO:0007669"/>
    <property type="project" value="InterPro"/>
</dbReference>
<dbReference type="Gene3D" id="3.30.1120.40">
    <property type="entry name" value="Stage V sporulation protein G"/>
    <property type="match status" value="1"/>
</dbReference>
<dbReference type="HAMAP" id="MF_00819">
    <property type="entry name" value="SpoVG"/>
    <property type="match status" value="1"/>
</dbReference>
<dbReference type="InterPro" id="IPR007170">
    <property type="entry name" value="SpoVG"/>
</dbReference>
<dbReference type="InterPro" id="IPR036751">
    <property type="entry name" value="SpoVG_sf"/>
</dbReference>
<dbReference type="NCBIfam" id="NF009749">
    <property type="entry name" value="PRK13259.1"/>
    <property type="match status" value="1"/>
</dbReference>
<dbReference type="PANTHER" id="PTHR38429">
    <property type="entry name" value="SEPTATION PROTEIN SPOVG-RELATED"/>
    <property type="match status" value="1"/>
</dbReference>
<dbReference type="PANTHER" id="PTHR38429:SF1">
    <property type="entry name" value="SEPTATION PROTEIN SPOVG-RELATED"/>
    <property type="match status" value="1"/>
</dbReference>
<dbReference type="Pfam" id="PF04026">
    <property type="entry name" value="SpoVG"/>
    <property type="match status" value="1"/>
</dbReference>
<dbReference type="SUPFAM" id="SSF160537">
    <property type="entry name" value="SpoVG-like"/>
    <property type="match status" value="1"/>
</dbReference>
<comment type="function">
    <text evidence="1">Could be involved in septation.</text>
</comment>
<comment type="similarity">
    <text evidence="1">Belongs to the SpoVG family.</text>
</comment>
<accession>A6LPJ0</accession>
<proteinExistence type="inferred from homology"/>
<feature type="chain" id="PRO_1000083845" description="Putative septation protein SpoVG">
    <location>
        <begin position="1"/>
        <end position="91"/>
    </location>
</feature>
<protein>
    <recommendedName>
        <fullName evidence="1">Putative septation protein SpoVG</fullName>
    </recommendedName>
</protein>
<sequence length="91" mass="10176">MQITDVRIRKIASEGKMKGIVSVTFDNEFVVHDIKVIEGQMGLFIAMPSRKTPDGEFKDIAHPINTEAREKIQTAILEAYEKAVSEEVVEG</sequence>
<name>SP5G_CLOB8</name>
<organism>
    <name type="scientific">Clostridium beijerinckii (strain ATCC 51743 / NCIMB 8052)</name>
    <name type="common">Clostridium acetobutylicum</name>
    <dbReference type="NCBI Taxonomy" id="290402"/>
    <lineage>
        <taxon>Bacteria</taxon>
        <taxon>Bacillati</taxon>
        <taxon>Bacillota</taxon>
        <taxon>Clostridia</taxon>
        <taxon>Eubacteriales</taxon>
        <taxon>Clostridiaceae</taxon>
        <taxon>Clostridium</taxon>
    </lineage>
</organism>